<comment type="function">
    <text evidence="1">Transports viral genome to neighboring plant cells directly through plasmosdesmata, without any budding. The movement protein allows efficient cell to cell propagation, by bypassing the host cell wall barrier. Acts by forming a tubular structure at the host plasmodesmata, enlarging it enough to allow free passage of virion capsids (By similarity).</text>
</comment>
<comment type="subcellular location">
    <subcellularLocation>
        <location evidence="1">Host cell junction</location>
        <location evidence="1">Host plasmodesma</location>
    </subcellularLocation>
    <text evidence="1">Assembles into long tubular structures at the surface of the infected protoplast.</text>
</comment>
<comment type="similarity">
    <text evidence="2">Belongs to the alfamovirus movement protein family.</text>
</comment>
<proteinExistence type="inferred from homology"/>
<feature type="chain" id="PRO_0000083229" description="Movement protein">
    <location>
        <begin position="1"/>
        <end position="300"/>
    </location>
</feature>
<name>MVP_AMVYS</name>
<gene>
    <name type="ORF">ORF3a</name>
</gene>
<keyword id="KW-1031">Host cell junction</keyword>
<keyword id="KW-0813">Transport</keyword>
<keyword id="KW-0916">Viral movement protein</keyword>
<organism>
    <name type="scientific">Alfalfa mosaic virus (strain YSMV)</name>
    <dbReference type="NCBI Taxonomy" id="12325"/>
    <lineage>
        <taxon>Viruses</taxon>
        <taxon>Riboviria</taxon>
        <taxon>Orthornavirae</taxon>
        <taxon>Kitrinoviricota</taxon>
        <taxon>Alsuviricetes</taxon>
        <taxon>Martellivirales</taxon>
        <taxon>Bromoviridae</taxon>
        <taxon>Alfamovirus</taxon>
        <taxon>Alfalfa mosaic virus</taxon>
    </lineage>
</organism>
<protein>
    <recommendedName>
        <fullName>Movement protein</fullName>
        <shortName>MP</shortName>
    </recommendedName>
    <alternativeName>
        <fullName>Protein 3A</fullName>
    </alternativeName>
</protein>
<reference key="1">
    <citation type="journal article" date="1991" name="Virology">
        <title>Role of alfalfa mosaic virus coat protein gene in symptom formation.</title>
        <authorList>
            <person name="Neeleman L."/>
            <person name="der Kuyl A.C."/>
            <person name="Bol J.F."/>
        </authorList>
    </citation>
    <scope>NUCLEOTIDE SEQUENCE [GENOMIC RNA]</scope>
</reference>
<sequence length="300" mass="32395">MENTKTNASSSGMSSSSSFSVSYAEEMLLADEVSKINSMSILGPNQLKLCTQLVLSNGAAPVVLSLVSKEKKSILSRILPKIGQRLYVHHSAIYLLYMPNILKSSSGSITLKLFDEATEELVDVDTDHDATQACIFAGRYPRSILAKDAAKGHDLKLVVHAVASTKANSAVGVLYPIWEDELSRKQILERGADFLKFPIAETEPVRDLLNAGKLTDFVLDRTRLGVGSKNDPSPVLLEPRAKITGKAKTVFIPEGPSVPNTTISGMAPTVRIDAGSPKGLGVPKGFTYESFIKDEILPDH</sequence>
<accession>P24265</accession>
<evidence type="ECO:0000250" key="1"/>
<evidence type="ECO:0000305" key="2"/>
<dbReference type="EMBL" id="M59241">
    <property type="protein sequence ID" value="AAA46287.1"/>
    <property type="molecule type" value="Genomic_RNA"/>
</dbReference>
<dbReference type="PIR" id="A37948">
    <property type="entry name" value="WMFMYS"/>
</dbReference>
<dbReference type="GO" id="GO:0044219">
    <property type="term" value="C:host cell plasmodesma"/>
    <property type="evidence" value="ECO:0007669"/>
    <property type="project" value="UniProtKB-SubCell"/>
</dbReference>
<dbReference type="GO" id="GO:0046740">
    <property type="term" value="P:transport of virus in host, cell to cell"/>
    <property type="evidence" value="ECO:0007669"/>
    <property type="project" value="UniProtKB-KW"/>
</dbReference>
<dbReference type="InterPro" id="IPR002538">
    <property type="entry name" value="Bromo_MP"/>
</dbReference>
<dbReference type="Pfam" id="PF01573">
    <property type="entry name" value="Bromo_MP"/>
    <property type="match status" value="1"/>
</dbReference>
<organismHost>
    <name type="scientific">Apium graveolens</name>
    <name type="common">Celery</name>
    <dbReference type="NCBI Taxonomy" id="4045"/>
</organismHost>
<organismHost>
    <name type="scientific">Astragalus glycyphyllos</name>
    <name type="common">Wild liquorice</name>
    <dbReference type="NCBI Taxonomy" id="83862"/>
</organismHost>
<organismHost>
    <name type="scientific">Capsicum annuum</name>
    <name type="common">Capsicum pepper</name>
    <dbReference type="NCBI Taxonomy" id="4072"/>
</organismHost>
<organismHost>
    <name type="scientific">Caryopteris incana</name>
    <dbReference type="NCBI Taxonomy" id="41386"/>
</organismHost>
<organismHost>
    <name type="scientific">Cicer arietinum</name>
    <name type="common">Chickpea</name>
    <name type="synonym">Garbanzo</name>
    <dbReference type="NCBI Taxonomy" id="3827"/>
</organismHost>
<organismHost>
    <name type="scientific">Glycine max</name>
    <name type="common">Soybean</name>
    <name type="synonym">Glycine hispida</name>
    <dbReference type="NCBI Taxonomy" id="3847"/>
</organismHost>
<organismHost>
    <name type="scientific">Lablab purpureus</name>
    <name type="common">Hyacinth bean</name>
    <name type="synonym">Dolichos lablab</name>
    <dbReference type="NCBI Taxonomy" id="35936"/>
</organismHost>
<organismHost>
    <name type="scientific">Lactuca sativa</name>
    <name type="common">Garden lettuce</name>
    <dbReference type="NCBI Taxonomy" id="4236"/>
</organismHost>
<organismHost>
    <name type="scientific">Lens culinaris</name>
    <name type="common">Lentil</name>
    <name type="synonym">Cicer lens</name>
    <dbReference type="NCBI Taxonomy" id="3864"/>
</organismHost>
<organismHost>
    <name type="scientific">Lupinus</name>
    <dbReference type="NCBI Taxonomy" id="3869"/>
</organismHost>
<organismHost>
    <name type="scientific">Malva parviflora</name>
    <name type="common">Little mallow</name>
    <name type="synonym">Cheeseweed mallow</name>
    <dbReference type="NCBI Taxonomy" id="145753"/>
</organismHost>
<organismHost>
    <name type="scientific">Medicago sativa</name>
    <name type="common">Alfalfa</name>
    <dbReference type="NCBI Taxonomy" id="3879"/>
</organismHost>
<organismHost>
    <name type="scientific">Nicotiana tabacum</name>
    <name type="common">Common tobacco</name>
    <dbReference type="NCBI Taxonomy" id="4097"/>
</organismHost>
<organismHost>
    <name type="scientific">Phaseolus vulgaris</name>
    <name type="common">Kidney bean</name>
    <name type="synonym">French bean</name>
    <dbReference type="NCBI Taxonomy" id="3885"/>
</organismHost>
<organismHost>
    <name type="scientific">Philadelphus</name>
    <dbReference type="NCBI Taxonomy" id="23113"/>
</organismHost>
<organismHost>
    <name type="scientific">Pisum sativum</name>
    <name type="common">Garden pea</name>
    <name type="synonym">Lathyrus oleraceus</name>
    <dbReference type="NCBI Taxonomy" id="3888"/>
</organismHost>
<organismHost>
    <name type="scientific">Solanum lycopersicum</name>
    <name type="common">Tomato</name>
    <name type="synonym">Lycopersicon esculentum</name>
    <dbReference type="NCBI Taxonomy" id="4081"/>
</organismHost>
<organismHost>
    <name type="scientific">Solanum tuberosum</name>
    <name type="common">Potato</name>
    <dbReference type="NCBI Taxonomy" id="4113"/>
</organismHost>
<organismHost>
    <name type="scientific">Trifolium incarnatum</name>
    <name type="common">Crimson clover</name>
    <dbReference type="NCBI Taxonomy" id="60916"/>
</organismHost>
<organismHost>
    <name type="scientific">Trifolium repens</name>
    <name type="common">Creeping white clover</name>
    <dbReference type="NCBI Taxonomy" id="3899"/>
</organismHost>
<organismHost>
    <name type="scientific">Viburnum opulus</name>
    <name type="common">High-bush cranberry</name>
    <dbReference type="NCBI Taxonomy" id="85293"/>
</organismHost>
<organismHost>
    <name type="scientific">Vigna radiata var. radiata</name>
    <name type="common">Mung bean</name>
    <name type="synonym">Phaseolus aureus</name>
    <dbReference type="NCBI Taxonomy" id="3916"/>
</organismHost>
<organismHost>
    <name type="scientific">Vigna unguiculata</name>
    <name type="common">Cowpea</name>
    <dbReference type="NCBI Taxonomy" id="3917"/>
</organismHost>